<name>ARR16_ARATH</name>
<proteinExistence type="evidence at protein level"/>
<organism>
    <name type="scientific">Arabidopsis thaliana</name>
    <name type="common">Mouse-ear cress</name>
    <dbReference type="NCBI Taxonomy" id="3702"/>
    <lineage>
        <taxon>Eukaryota</taxon>
        <taxon>Viridiplantae</taxon>
        <taxon>Streptophyta</taxon>
        <taxon>Embryophyta</taxon>
        <taxon>Tracheophyta</taxon>
        <taxon>Spermatophyta</taxon>
        <taxon>Magnoliopsida</taxon>
        <taxon>eudicotyledons</taxon>
        <taxon>Gunneridae</taxon>
        <taxon>Pentapetalae</taxon>
        <taxon>rosids</taxon>
        <taxon>malvids</taxon>
        <taxon>Brassicales</taxon>
        <taxon>Brassicaceae</taxon>
        <taxon>Camelineae</taxon>
        <taxon>Arabidopsis</taxon>
    </lineage>
</organism>
<sequence length="164" mass="18268">MNSSGGSCSSLMDVVAYDHHLHHGHDEELHVLAVDDNLIDRKLVERLLKISCCKVTTAENALRALEYLGLGDQNQHIDALTCNVMKVSLIITDYCMPGMTGFELLKKVKESSNLREVPVVIMSSENIPTRINKCLASGAQMFMQKPLKLADVEKLKCHLMNCRS</sequence>
<accession>Q9SHC2</accession>
<protein>
    <recommendedName>
        <fullName>Two-component response regulator ARR16</fullName>
    </recommendedName>
</protein>
<keyword id="KW-0025">Alternative splicing</keyword>
<keyword id="KW-0932">Cytokinin signaling pathway</keyword>
<keyword id="KW-0539">Nucleus</keyword>
<keyword id="KW-0597">Phosphoprotein</keyword>
<keyword id="KW-1185">Reference proteome</keyword>
<keyword id="KW-0804">Transcription</keyword>
<keyword id="KW-0805">Transcription regulation</keyword>
<keyword id="KW-0902">Two-component regulatory system</keyword>
<evidence type="ECO:0000255" key="1">
    <source>
        <dbReference type="PROSITE-ProRule" id="PRU00169"/>
    </source>
</evidence>
<evidence type="ECO:0000269" key="2">
    <source>
    </source>
</evidence>
<evidence type="ECO:0000269" key="3">
    <source>
    </source>
</evidence>
<evidence type="ECO:0000269" key="4">
    <source>
    </source>
</evidence>
<evidence type="ECO:0000305" key="5"/>
<gene>
    <name type="primary">ARR16</name>
    <name type="ordered locus">At2g40670</name>
    <name type="ORF">T7D17.15</name>
</gene>
<reference key="1">
    <citation type="journal article" date="2000" name="Plant Physiol.">
        <title>Characterization of the response of the Arabidopsis response regulator gene family to cytokinin.</title>
        <authorList>
            <person name="D'Agostino I.B."/>
            <person name="Deruere J."/>
            <person name="Kieber J.J."/>
        </authorList>
    </citation>
    <scope>NUCLEOTIDE SEQUENCE [MRNA]</scope>
    <scope>INDUCTION</scope>
    <source>
        <strain>cv. Columbia</strain>
    </source>
</reference>
<reference key="2">
    <citation type="submission" date="2000-09" db="EMBL/GenBank/DDBJ databases">
        <title>Expression of a new Arabidopsis thaliana type A response regulator.</title>
        <authorList>
            <person name="Bezhani S."/>
            <person name="Pfannschmidt T."/>
            <person name="Oelmueller R."/>
        </authorList>
    </citation>
    <scope>NUCLEOTIDE SEQUENCE [MRNA]</scope>
    <source>
        <strain>cv. Columbia</strain>
    </source>
</reference>
<reference key="3">
    <citation type="journal article" date="1999" name="Nature">
        <title>Sequence and analysis of chromosome 2 of the plant Arabidopsis thaliana.</title>
        <authorList>
            <person name="Lin X."/>
            <person name="Kaul S."/>
            <person name="Rounsley S.D."/>
            <person name="Shea T.P."/>
            <person name="Benito M.-I."/>
            <person name="Town C.D."/>
            <person name="Fujii C.Y."/>
            <person name="Mason T.M."/>
            <person name="Bowman C.L."/>
            <person name="Barnstead M.E."/>
            <person name="Feldblyum T.V."/>
            <person name="Buell C.R."/>
            <person name="Ketchum K.A."/>
            <person name="Lee J.J."/>
            <person name="Ronning C.M."/>
            <person name="Koo H.L."/>
            <person name="Moffat K.S."/>
            <person name="Cronin L.A."/>
            <person name="Shen M."/>
            <person name="Pai G."/>
            <person name="Van Aken S."/>
            <person name="Umayam L."/>
            <person name="Tallon L.J."/>
            <person name="Gill J.E."/>
            <person name="Adams M.D."/>
            <person name="Carrera A.J."/>
            <person name="Creasy T.H."/>
            <person name="Goodman H.M."/>
            <person name="Somerville C.R."/>
            <person name="Copenhaver G.P."/>
            <person name="Preuss D."/>
            <person name="Nierman W.C."/>
            <person name="White O."/>
            <person name="Eisen J.A."/>
            <person name="Salzberg S.L."/>
            <person name="Fraser C.M."/>
            <person name="Venter J.C."/>
        </authorList>
    </citation>
    <scope>NUCLEOTIDE SEQUENCE [LARGE SCALE GENOMIC DNA]</scope>
    <source>
        <strain>cv. Columbia</strain>
    </source>
</reference>
<reference key="4">
    <citation type="journal article" date="2017" name="Plant J.">
        <title>Araport11: a complete reannotation of the Arabidopsis thaliana reference genome.</title>
        <authorList>
            <person name="Cheng C.Y."/>
            <person name="Krishnakumar V."/>
            <person name="Chan A.P."/>
            <person name="Thibaud-Nissen F."/>
            <person name="Schobel S."/>
            <person name="Town C.D."/>
        </authorList>
    </citation>
    <scope>GENOME REANNOTATION</scope>
    <source>
        <strain>cv. Columbia</strain>
    </source>
</reference>
<reference key="5">
    <citation type="journal article" date="2002" name="Plant Cell Physiol.">
        <title>Characterization of the ARR15 and ARR16 response regulators with special reference to the cytokinin signaling pathway mediated by the AHK4 histidine kinase in roots of Arabidopsis thaliana.</title>
        <authorList>
            <person name="Kiba T."/>
            <person name="Yamada H."/>
            <person name="Mizuno T."/>
        </authorList>
    </citation>
    <scope>FUNCTION</scope>
    <scope>INDUCTION</scope>
</reference>
<reference key="6">
    <citation type="journal article" date="2004" name="Plant Cell">
        <title>Type-A Arabidopsis response regulators are partially redundant negative regulators of cytokinin signaling.</title>
        <authorList>
            <person name="To J.P.C."/>
            <person name="Haberer G."/>
            <person name="Ferreira F.J."/>
            <person name="Deruere J."/>
            <person name="Mason M.G."/>
            <person name="Schaller G.E."/>
            <person name="Alonso J.M."/>
            <person name="Ecker J.R."/>
            <person name="Kieber J.J."/>
        </authorList>
    </citation>
    <scope>FUNCTION</scope>
</reference>
<feature type="chain" id="PRO_0000081432" description="Two-component response regulator ARR16">
    <location>
        <begin position="1"/>
        <end position="164"/>
    </location>
</feature>
<feature type="domain" description="Response regulatory" evidence="1">
    <location>
        <begin position="30"/>
        <end position="160"/>
    </location>
</feature>
<feature type="modified residue" description="4-aspartylphosphate" evidence="1">
    <location>
        <position position="93"/>
    </location>
</feature>
<dbReference type="EMBL" id="AF305721">
    <property type="protein sequence ID" value="AAG40612.1"/>
    <property type="molecule type" value="mRNA"/>
</dbReference>
<dbReference type="EMBL" id="AJ279079">
    <property type="protein sequence ID" value="CAC10396.1"/>
    <property type="molecule type" value="mRNA"/>
</dbReference>
<dbReference type="EMBL" id="CP002685">
    <property type="protein sequence ID" value="AEC09862.1"/>
    <property type="molecule type" value="Genomic_DNA"/>
</dbReference>
<dbReference type="PIR" id="D84832">
    <property type="entry name" value="D84832"/>
</dbReference>
<dbReference type="RefSeq" id="NP_181599.1">
    <molecule id="Q9SHC2-1"/>
    <property type="nucleotide sequence ID" value="NM_129629.3"/>
</dbReference>
<dbReference type="SMR" id="Q9SHC2"/>
<dbReference type="BioGRID" id="4000">
    <property type="interactions" value="9"/>
</dbReference>
<dbReference type="FunCoup" id="Q9SHC2">
    <property type="interactions" value="303"/>
</dbReference>
<dbReference type="IntAct" id="Q9SHC2">
    <property type="interactions" value="11"/>
</dbReference>
<dbReference type="STRING" id="3702.Q9SHC2"/>
<dbReference type="PaxDb" id="3702-AT2G40670.2"/>
<dbReference type="EnsemblPlants" id="AT2G40670.1">
    <molecule id="Q9SHC2-1"/>
    <property type="protein sequence ID" value="AT2G40670.1"/>
    <property type="gene ID" value="AT2G40670"/>
</dbReference>
<dbReference type="GeneID" id="818662"/>
<dbReference type="Gramene" id="AT2G40670.1">
    <molecule id="Q9SHC2-1"/>
    <property type="protein sequence ID" value="AT2G40670.1"/>
    <property type="gene ID" value="AT2G40670"/>
</dbReference>
<dbReference type="KEGG" id="ath:AT2G40670"/>
<dbReference type="Araport" id="AT2G40670"/>
<dbReference type="TAIR" id="AT2G40670">
    <property type="gene designation" value="RR16"/>
</dbReference>
<dbReference type="eggNOG" id="KOG1601">
    <property type="taxonomic scope" value="Eukaryota"/>
</dbReference>
<dbReference type="HOGENOM" id="CLU_000445_69_5_1"/>
<dbReference type="InParanoid" id="Q9SHC2"/>
<dbReference type="OMA" id="MAGINDD"/>
<dbReference type="PhylomeDB" id="Q9SHC2"/>
<dbReference type="PRO" id="PR:Q9SHC2"/>
<dbReference type="Proteomes" id="UP000006548">
    <property type="component" value="Chromosome 2"/>
</dbReference>
<dbReference type="ExpressionAtlas" id="Q9SHC2">
    <property type="expression patterns" value="baseline and differential"/>
</dbReference>
<dbReference type="GO" id="GO:0005634">
    <property type="term" value="C:nucleus"/>
    <property type="evidence" value="ECO:0007669"/>
    <property type="project" value="UniProtKB-SubCell"/>
</dbReference>
<dbReference type="GO" id="GO:0009736">
    <property type="term" value="P:cytokinin-activated signaling pathway"/>
    <property type="evidence" value="ECO:0007669"/>
    <property type="project" value="UniProtKB-KW"/>
</dbReference>
<dbReference type="GO" id="GO:0000160">
    <property type="term" value="P:phosphorelay signal transduction system"/>
    <property type="evidence" value="ECO:0007669"/>
    <property type="project" value="UniProtKB-KW"/>
</dbReference>
<dbReference type="CDD" id="cd17581">
    <property type="entry name" value="REC_typeA_ARR"/>
    <property type="match status" value="1"/>
</dbReference>
<dbReference type="FunFam" id="3.40.50.2300:FF:000159">
    <property type="entry name" value="Two-component response regulator ORR5"/>
    <property type="match status" value="1"/>
</dbReference>
<dbReference type="Gene3D" id="3.40.50.2300">
    <property type="match status" value="1"/>
</dbReference>
<dbReference type="InterPro" id="IPR045279">
    <property type="entry name" value="ARR-like"/>
</dbReference>
<dbReference type="InterPro" id="IPR011006">
    <property type="entry name" value="CheY-like_superfamily"/>
</dbReference>
<dbReference type="InterPro" id="IPR001789">
    <property type="entry name" value="Sig_transdc_resp-reg_receiver"/>
</dbReference>
<dbReference type="PANTHER" id="PTHR43874">
    <property type="entry name" value="TWO-COMPONENT RESPONSE REGULATOR"/>
    <property type="match status" value="1"/>
</dbReference>
<dbReference type="PANTHER" id="PTHR43874:SF99">
    <property type="entry name" value="TWO-COMPONENT RESPONSE REGULATOR ARR16"/>
    <property type="match status" value="1"/>
</dbReference>
<dbReference type="Pfam" id="PF00072">
    <property type="entry name" value="Response_reg"/>
    <property type="match status" value="1"/>
</dbReference>
<dbReference type="SMART" id="SM00448">
    <property type="entry name" value="REC"/>
    <property type="match status" value="1"/>
</dbReference>
<dbReference type="SUPFAM" id="SSF52172">
    <property type="entry name" value="CheY-like"/>
    <property type="match status" value="1"/>
</dbReference>
<dbReference type="PROSITE" id="PS50110">
    <property type="entry name" value="RESPONSE_REGULATORY"/>
    <property type="match status" value="1"/>
</dbReference>
<comment type="function">
    <text evidence="3 4">Functions as a response regulator involved in His-to-Asp phosphorelay signal transduction system. Phosphorylation of the Asp residue in the receiver domain activates the ability of the protein to promote the transcription of target genes. Type-A response regulators seem to act as negative regulators of the cytokinin signaling.</text>
</comment>
<comment type="interaction">
    <interactant intactId="EBI-1100982">
        <id>Q9SHC2</id>
    </interactant>
    <interactant intactId="EBI-1100687">
        <id>Q9ZNV8</id>
        <label>AHP2</label>
    </interactant>
    <organismsDiffer>false</organismsDiffer>
    <experiments>2</experiments>
</comment>
<comment type="interaction">
    <interactant intactId="EBI-1100982">
        <id>Q9SHC2</id>
    </interactant>
    <interactant intactId="EBI-1100711">
        <id>Q9SAZ5</id>
        <label>AHP3</label>
    </interactant>
    <organismsDiffer>false</organismsDiffer>
    <experiments>2</experiments>
</comment>
<comment type="interaction">
    <interactant intactId="EBI-1100982">
        <id>Q9SHC2</id>
    </interactant>
    <interactant intactId="EBI-1100725">
        <id>Q67XQ1</id>
        <label>At1g03430</label>
    </interactant>
    <organismsDiffer>false</organismsDiffer>
    <experiments>3</experiments>
</comment>
<comment type="interaction">
    <interactant intactId="EBI-1100982">
        <id>Q9SHC2</id>
    </interactant>
    <interactant intactId="EBI-4426144">
        <id>Q9C9L2</id>
        <label>TCP15</label>
    </interactant>
    <organismsDiffer>false</organismsDiffer>
    <experiments>3</experiments>
</comment>
<comment type="subcellular location">
    <subcellularLocation>
        <location evidence="5">Nucleus</location>
    </subcellularLocation>
</comment>
<comment type="alternative products">
    <event type="alternative splicing"/>
    <isoform>
        <id>Q9SHC2-1</id>
        <name>1</name>
        <sequence type="displayed"/>
    </isoform>
    <text>A number of isoforms are produced. According to EST sequences.</text>
</comment>
<comment type="induction">
    <text evidence="2 3">By cytokinin (BA) in roots.</text>
</comment>
<comment type="PTM">
    <text>Two-component system major event consists of a His-to-Asp phosphorelay between a sensor histidine kinase (HK) and a response regulator (RR). In plants, the His-to-Asp phosphorelay involves an additional intermediate named Histidine-containing phosphotransfer protein (HPt). This multistep phosphorelay consists of a His-Asp-His-Asp sequential transfer of a phosphate group between first a His and an Asp of the HK protein, followed by the transfer to a conserved His of the HPt protein and finally the transfer to an Asp in the receiver domain of the RR protein.</text>
</comment>
<comment type="similarity">
    <text evidence="5">Belongs to the ARR family. Type-A subfamily.</text>
</comment>